<keyword id="KW-0025">Alternative splicing</keyword>
<keyword id="KW-0963">Cytoplasm</keyword>
<keyword id="KW-0206">Cytoskeleton</keyword>
<keyword id="KW-1267">Proteomics identification</keyword>
<keyword id="KW-1185">Reference proteome</keyword>
<keyword id="KW-0808">Transferase</keyword>
<keyword id="KW-0043">Tumor suppressor</keyword>
<keyword id="KW-0833">Ubl conjugation pathway</keyword>
<dbReference type="EC" id="2.3.2.-" evidence="2"/>
<dbReference type="EMBL" id="AL583860">
    <property type="status" value="NOT_ANNOTATED_CDS"/>
    <property type="molecule type" value="Genomic_DNA"/>
</dbReference>
<dbReference type="EMBL" id="AL589787">
    <property type="status" value="NOT_ANNOTATED_CDS"/>
    <property type="molecule type" value="Genomic_DNA"/>
</dbReference>
<dbReference type="EMBL" id="BC021140">
    <property type="protein sequence ID" value="AAH21140.1"/>
    <property type="molecule type" value="mRNA"/>
</dbReference>
<dbReference type="EMBL" id="BC140898">
    <property type="protein sequence ID" value="AAI40899.1"/>
    <property type="molecule type" value="mRNA"/>
</dbReference>
<dbReference type="EMBL" id="BC146869">
    <property type="protein sequence ID" value="AAI46870.1"/>
    <property type="molecule type" value="mRNA"/>
</dbReference>
<dbReference type="EMBL" id="AK057500">
    <property type="protein sequence ID" value="BAB71512.1"/>
    <property type="molecule type" value="mRNA"/>
</dbReference>
<dbReference type="EMBL" id="AF435960">
    <property type="protein sequence ID" value="AAM20911.1"/>
    <property type="status" value="ALT_INIT"/>
    <property type="molecule type" value="mRNA"/>
</dbReference>
<dbReference type="CCDS" id="CCDS31310.1">
    <molecule id="Q96M02-1"/>
</dbReference>
<dbReference type="RefSeq" id="NP_001004298.2">
    <molecule id="Q96M02-1"/>
    <property type="nucleotide sequence ID" value="NM_001004298.2"/>
</dbReference>
<dbReference type="SMR" id="Q96M02"/>
<dbReference type="BioGRID" id="125615">
    <property type="interactions" value="10"/>
</dbReference>
<dbReference type="FunCoup" id="Q96M02">
    <property type="interactions" value="321"/>
</dbReference>
<dbReference type="IntAct" id="Q96M02">
    <property type="interactions" value="5"/>
</dbReference>
<dbReference type="STRING" id="9606.ENSP00000284694"/>
<dbReference type="GlyGen" id="Q96M02">
    <property type="glycosylation" value="1 site, 1 O-linked glycan (1 site)"/>
</dbReference>
<dbReference type="iPTMnet" id="Q96M02"/>
<dbReference type="PhosphoSitePlus" id="Q96M02"/>
<dbReference type="BioMuta" id="C10orf90"/>
<dbReference type="DMDM" id="143377520"/>
<dbReference type="MassIVE" id="Q96M02"/>
<dbReference type="PaxDb" id="9606-ENSP00000284694"/>
<dbReference type="PeptideAtlas" id="Q96M02"/>
<dbReference type="ProteomicsDB" id="77276">
    <molecule id="Q96M02-1"/>
</dbReference>
<dbReference type="ProteomicsDB" id="77277">
    <molecule id="Q96M02-2"/>
</dbReference>
<dbReference type="Antibodypedia" id="48773">
    <property type="antibodies" value="26 antibodies from 9 providers"/>
</dbReference>
<dbReference type="DNASU" id="118611"/>
<dbReference type="Ensembl" id="ENST00000284694.11">
    <molecule id="Q96M02-1"/>
    <property type="protein sequence ID" value="ENSP00000284694.7"/>
    <property type="gene ID" value="ENSG00000154493.20"/>
</dbReference>
<dbReference type="GeneID" id="118611"/>
<dbReference type="KEGG" id="hsa:118611"/>
<dbReference type="UCSC" id="uc001ljq.4">
    <molecule id="Q96M02-1"/>
    <property type="organism name" value="human"/>
</dbReference>
<dbReference type="AGR" id="HGNC:26563"/>
<dbReference type="CTD" id="118611"/>
<dbReference type="DisGeNET" id="118611"/>
<dbReference type="GeneCards" id="C10orf90"/>
<dbReference type="HGNC" id="HGNC:26563">
    <property type="gene designation" value="C10orf90"/>
</dbReference>
<dbReference type="HPA" id="ENSG00000154493">
    <property type="expression patterns" value="Tissue enriched (brain)"/>
</dbReference>
<dbReference type="MIM" id="617735">
    <property type="type" value="gene"/>
</dbReference>
<dbReference type="neXtProt" id="NX_Q96M02"/>
<dbReference type="OpenTargets" id="ENSG00000154493"/>
<dbReference type="PharmGKB" id="PA134895930"/>
<dbReference type="VEuPathDB" id="HostDB:ENSG00000154493"/>
<dbReference type="eggNOG" id="ENOG502S6G8">
    <property type="taxonomic scope" value="Eukaryota"/>
</dbReference>
<dbReference type="GeneTree" id="ENSGT00940000153123"/>
<dbReference type="HOGENOM" id="CLU_026504_0_0_1"/>
<dbReference type="InParanoid" id="Q96M02"/>
<dbReference type="OMA" id="HEYWVTH"/>
<dbReference type="OrthoDB" id="8899035at2759"/>
<dbReference type="PAN-GO" id="Q96M02">
    <property type="GO annotations" value="5 GO annotations based on evolutionary models"/>
</dbReference>
<dbReference type="PhylomeDB" id="Q96M02"/>
<dbReference type="PathwayCommons" id="Q96M02"/>
<dbReference type="SignaLink" id="Q96M02"/>
<dbReference type="SIGNOR" id="Q96M02"/>
<dbReference type="BioGRID-ORCS" id="118611">
    <property type="hits" value="10 hits in 1089 CRISPR screens"/>
</dbReference>
<dbReference type="ChiTaRS" id="C10orf90">
    <property type="organism name" value="human"/>
</dbReference>
<dbReference type="GenomeRNAi" id="118611"/>
<dbReference type="Pharos" id="Q96M02">
    <property type="development level" value="Tbio"/>
</dbReference>
<dbReference type="PRO" id="PR:Q96M02"/>
<dbReference type="Proteomes" id="UP000005640">
    <property type="component" value="Chromosome 10"/>
</dbReference>
<dbReference type="RNAct" id="Q96M02">
    <property type="molecule type" value="protein"/>
</dbReference>
<dbReference type="Bgee" id="ENSG00000154493">
    <property type="expression patterns" value="Expressed in C1 segment of cervical spinal cord and 104 other cell types or tissues"/>
</dbReference>
<dbReference type="ExpressionAtlas" id="Q96M02">
    <property type="expression patterns" value="baseline and differential"/>
</dbReference>
<dbReference type="GO" id="GO:0015629">
    <property type="term" value="C:actin cytoskeleton"/>
    <property type="evidence" value="ECO:0000314"/>
    <property type="project" value="UniProtKB"/>
</dbReference>
<dbReference type="GO" id="GO:0005814">
    <property type="term" value="C:centriole"/>
    <property type="evidence" value="ECO:0000318"/>
    <property type="project" value="GO_Central"/>
</dbReference>
<dbReference type="GO" id="GO:0005813">
    <property type="term" value="C:centrosome"/>
    <property type="evidence" value="ECO:0000314"/>
    <property type="project" value="UniProtKB"/>
</dbReference>
<dbReference type="GO" id="GO:0005737">
    <property type="term" value="C:cytoplasm"/>
    <property type="evidence" value="ECO:0000314"/>
    <property type="project" value="UniProtKB"/>
</dbReference>
<dbReference type="GO" id="GO:0005829">
    <property type="term" value="C:cytosol"/>
    <property type="evidence" value="ECO:0000314"/>
    <property type="project" value="HPA"/>
</dbReference>
<dbReference type="GO" id="GO:0005654">
    <property type="term" value="C:nucleoplasm"/>
    <property type="evidence" value="ECO:0000314"/>
    <property type="project" value="HPA"/>
</dbReference>
<dbReference type="GO" id="GO:0061630">
    <property type="term" value="F:ubiquitin protein ligase activity"/>
    <property type="evidence" value="ECO:0000250"/>
    <property type="project" value="UniProtKB"/>
</dbReference>
<dbReference type="GO" id="GO:0000209">
    <property type="term" value="P:protein polyubiquitination"/>
    <property type="evidence" value="ECO:0000250"/>
    <property type="project" value="UniProtKB"/>
</dbReference>
<dbReference type="GO" id="GO:0050821">
    <property type="term" value="P:protein stabilization"/>
    <property type="evidence" value="ECO:0000250"/>
    <property type="project" value="UniProtKB"/>
</dbReference>
<dbReference type="GO" id="GO:0016567">
    <property type="term" value="P:protein ubiquitination"/>
    <property type="evidence" value="ECO:0000250"/>
    <property type="project" value="UniProtKB"/>
</dbReference>
<dbReference type="GO" id="GO:0046599">
    <property type="term" value="P:regulation of centriole replication"/>
    <property type="evidence" value="ECO:0000318"/>
    <property type="project" value="GO_Central"/>
</dbReference>
<dbReference type="InterPro" id="IPR029299">
    <property type="entry name" value="ALMS_motif"/>
</dbReference>
<dbReference type="InterPro" id="IPR041179">
    <property type="entry name" value="C10orf90_N"/>
</dbReference>
<dbReference type="PANTHER" id="PTHR21553:SF24">
    <property type="entry name" value="(E2-INDEPENDENT) E3 UBIQUITIN-CONJUGATING ENZYME FATS"/>
    <property type="match status" value="1"/>
</dbReference>
<dbReference type="PANTHER" id="PTHR21553">
    <property type="entry name" value="ALMS1-RELATED"/>
    <property type="match status" value="1"/>
</dbReference>
<dbReference type="Pfam" id="PF15309">
    <property type="entry name" value="ALMS_motif"/>
    <property type="match status" value="1"/>
</dbReference>
<dbReference type="Pfam" id="PF17730">
    <property type="entry name" value="Centro_C10orf90"/>
    <property type="match status" value="1"/>
</dbReference>
<comment type="function">
    <text evidence="2 8">Tumor suppressor that is required to sustain G2/M checkpoint after DNA damage. Acts as a p53/TP53 activator by inhibiting MDM2 binding to p53/TP53 and stimulating non-proteolytic polyubiquitination of p53/TP53. Exhibits ubiquitin ligase (E3) activity and assemble ubiquitin polymers through 'Lys-11'- (K11-), 'Lys-29'- (K29-) and 'Lys-63'- (K63)-linkages, independently of the ubiquitin-conjugating enzyme (E2). Promotes p53/TP53-dependent transcription of CDKN1A/p21, leading to robust checkpoint response. Mediates CDKN1A/p21 protein stability in a ubiquitin-independent manner. Interacts with HDAC1 and prevents binding of HDAC1 to CDKN1A/p21 and facilitates the acetylation and stabilization of CDKN1A/p21 (By similarity). May have a role in the assembly of primary cilia (Probable).</text>
</comment>
<comment type="subunit">
    <text evidence="2">Interacts with HDAC1; the interaction prevents binding of HDAC1 to CDKN1A/p21 and facilitates the acetylation and stabilization of CDKN1A/p21. Interacts with p53/TP53; the interaction inhibits binding of p53/TP53 and MDM2.</text>
</comment>
<comment type="subcellular location">
    <subcellularLocation>
        <location evidence="5">Cytoplasm</location>
    </subcellularLocation>
    <subcellularLocation>
        <location evidence="5">Cytoplasm</location>
        <location evidence="5">Cytoskeleton</location>
        <location evidence="5">Microtubule organizing center</location>
        <location evidence="5">Centrosome</location>
    </subcellularLocation>
    <text evidence="5">Localizes to the actin cytoskeleton in a proportion of cells. Colocalizes with centriolar acetylated tubulin.</text>
</comment>
<comment type="alternative products">
    <event type="alternative splicing"/>
    <isoform>
        <id>Q96M02-1</id>
        <name>1</name>
        <sequence type="displayed"/>
    </isoform>
    <isoform>
        <id>Q96M02-2</id>
        <name>2</name>
        <sequence type="described" ref="VSP_023458"/>
    </isoform>
</comment>
<comment type="sequence caution" evidence="7">
    <conflict type="erroneous initiation">
        <sequence resource="EMBL-CDS" id="AAM20911"/>
    </conflict>
    <text>Truncated N-terminus.</text>
</comment>
<protein>
    <recommendedName>
        <fullName evidence="7">(E2-independent) E3 ubiquitin-conjugating enzyme FATS</fullName>
        <ecNumber evidence="2">2.3.2.-</ecNumber>
    </recommendedName>
    <alternativeName>
        <fullName evidence="7">Centrosomal protein C10orf90</fullName>
    </alternativeName>
    <alternativeName>
        <fullName evidence="7">E2/E3 hybrid ubiquitin-protein ligase FATS</fullName>
    </alternativeName>
    <alternativeName>
        <fullName evidence="2">Fragile-site associated tumor suppressor homolog</fullName>
        <shortName evidence="2">FATS</shortName>
    </alternativeName>
</protein>
<evidence type="ECO:0000250" key="1"/>
<evidence type="ECO:0000250" key="2">
    <source>
        <dbReference type="UniProtKB" id="D2J0Y4"/>
    </source>
</evidence>
<evidence type="ECO:0000256" key="3">
    <source>
        <dbReference type="SAM" id="MobiDB-lite"/>
    </source>
</evidence>
<evidence type="ECO:0000269" key="4">
    <source>
    </source>
</evidence>
<evidence type="ECO:0000269" key="5">
    <source>
    </source>
</evidence>
<evidence type="ECO:0000303" key="6">
    <source ref="4"/>
</evidence>
<evidence type="ECO:0000305" key="7"/>
<evidence type="ECO:0000305" key="8">
    <source>
    </source>
</evidence>
<evidence type="ECO:0000312" key="9">
    <source>
        <dbReference type="HGNC" id="HGNC:26563"/>
    </source>
</evidence>
<feature type="chain" id="PRO_0000279492" description="(E2-independent) E3 ubiquitin-conjugating enzyme FATS">
    <location>
        <begin position="1"/>
        <end position="699"/>
    </location>
</feature>
<feature type="region of interest" description="Required for interaction with p53/TP53" evidence="2">
    <location>
        <begin position="48"/>
        <end position="116"/>
    </location>
</feature>
<feature type="region of interest" description="Disordered" evidence="3">
    <location>
        <begin position="107"/>
        <end position="134"/>
    </location>
</feature>
<feature type="region of interest" description="Required for interaction with HDAC1" evidence="1">
    <location>
        <begin position="116"/>
        <end position="224"/>
    </location>
</feature>
<feature type="region of interest" description="Disordered" evidence="3">
    <location>
        <begin position="443"/>
        <end position="473"/>
    </location>
</feature>
<feature type="region of interest" description="Disordered" evidence="3">
    <location>
        <begin position="528"/>
        <end position="569"/>
    </location>
</feature>
<feature type="region of interest" description="ALMS motif" evidence="1">
    <location>
        <begin position="571"/>
        <end position="699"/>
    </location>
</feature>
<feature type="compositionally biased region" description="Basic and acidic residues" evidence="3">
    <location>
        <begin position="113"/>
        <end position="129"/>
    </location>
</feature>
<feature type="compositionally biased region" description="Basic and acidic residues" evidence="3">
    <location>
        <begin position="460"/>
        <end position="473"/>
    </location>
</feature>
<feature type="compositionally biased region" description="Pro residues" evidence="3">
    <location>
        <begin position="534"/>
        <end position="545"/>
    </location>
</feature>
<feature type="splice variant" id="VSP_023458" description="In isoform 2." evidence="6">
    <location>
        <begin position="415"/>
        <end position="511"/>
    </location>
</feature>
<feature type="sequence variant" id="VAR_050855" description="In dbSNP:rs11558415.">
    <original>M</original>
    <variation>I</variation>
    <location>
        <position position="57"/>
    </location>
</feature>
<feature type="sequence variant" id="VAR_030908" description="In dbSNP:rs11245008.">
    <original>R</original>
    <variation>H</variation>
    <location>
        <position position="134"/>
    </location>
</feature>
<feature type="sequence variant" id="VAR_030909" description="In dbSNP:rs11245007." evidence="4">
    <original>D</original>
    <variation>N</variation>
    <location>
        <position position="262"/>
    </location>
</feature>
<feature type="sequence variant" id="VAR_050856" description="In dbSNP:rs12412320.">
    <original>D</original>
    <variation>E</variation>
    <location>
        <position position="531"/>
    </location>
</feature>
<feature type="sequence conflict" description="In Ref. 3; BAB71512." evidence="7" ref="3">
    <original>R</original>
    <variation>G</variation>
    <location>
        <position position="654"/>
    </location>
</feature>
<proteinExistence type="evidence at protein level"/>
<gene>
    <name evidence="9" type="primary">C10orf90</name>
    <name evidence="2" type="synonym">FATS</name>
</gene>
<name>CJ090_HUMAN</name>
<reference key="1">
    <citation type="journal article" date="2004" name="Nature">
        <title>The DNA sequence and comparative analysis of human chromosome 10.</title>
        <authorList>
            <person name="Deloukas P."/>
            <person name="Earthrowl M.E."/>
            <person name="Grafham D.V."/>
            <person name="Rubenfield M."/>
            <person name="French L."/>
            <person name="Steward C.A."/>
            <person name="Sims S.K."/>
            <person name="Jones M.C."/>
            <person name="Searle S."/>
            <person name="Scott C."/>
            <person name="Howe K."/>
            <person name="Hunt S.E."/>
            <person name="Andrews T.D."/>
            <person name="Gilbert J.G.R."/>
            <person name="Swarbreck D."/>
            <person name="Ashurst J.L."/>
            <person name="Taylor A."/>
            <person name="Battles J."/>
            <person name="Bird C.P."/>
            <person name="Ainscough R."/>
            <person name="Almeida J.P."/>
            <person name="Ashwell R.I.S."/>
            <person name="Ambrose K.D."/>
            <person name="Babbage A.K."/>
            <person name="Bagguley C.L."/>
            <person name="Bailey J."/>
            <person name="Banerjee R."/>
            <person name="Bates K."/>
            <person name="Beasley H."/>
            <person name="Bray-Allen S."/>
            <person name="Brown A.J."/>
            <person name="Brown J.Y."/>
            <person name="Burford D.C."/>
            <person name="Burrill W."/>
            <person name="Burton J."/>
            <person name="Cahill P."/>
            <person name="Camire D."/>
            <person name="Carter N.P."/>
            <person name="Chapman J.C."/>
            <person name="Clark S.Y."/>
            <person name="Clarke G."/>
            <person name="Clee C.M."/>
            <person name="Clegg S."/>
            <person name="Corby N."/>
            <person name="Coulson A."/>
            <person name="Dhami P."/>
            <person name="Dutta I."/>
            <person name="Dunn M."/>
            <person name="Faulkner L."/>
            <person name="Frankish A."/>
            <person name="Frankland J.A."/>
            <person name="Garner P."/>
            <person name="Garnett J."/>
            <person name="Gribble S."/>
            <person name="Griffiths C."/>
            <person name="Grocock R."/>
            <person name="Gustafson E."/>
            <person name="Hammond S."/>
            <person name="Harley J.L."/>
            <person name="Hart E."/>
            <person name="Heath P.D."/>
            <person name="Ho T.P."/>
            <person name="Hopkins B."/>
            <person name="Horne J."/>
            <person name="Howden P.J."/>
            <person name="Huckle E."/>
            <person name="Hynds C."/>
            <person name="Johnson C."/>
            <person name="Johnson D."/>
            <person name="Kana A."/>
            <person name="Kay M."/>
            <person name="Kimberley A.M."/>
            <person name="Kershaw J.K."/>
            <person name="Kokkinaki M."/>
            <person name="Laird G.K."/>
            <person name="Lawlor S."/>
            <person name="Lee H.M."/>
            <person name="Leongamornlert D.A."/>
            <person name="Laird G."/>
            <person name="Lloyd C."/>
            <person name="Lloyd D.M."/>
            <person name="Loveland J."/>
            <person name="Lovell J."/>
            <person name="McLaren S."/>
            <person name="McLay K.E."/>
            <person name="McMurray A."/>
            <person name="Mashreghi-Mohammadi M."/>
            <person name="Matthews L."/>
            <person name="Milne S."/>
            <person name="Nickerson T."/>
            <person name="Nguyen M."/>
            <person name="Overton-Larty E."/>
            <person name="Palmer S.A."/>
            <person name="Pearce A.V."/>
            <person name="Peck A.I."/>
            <person name="Pelan S."/>
            <person name="Phillimore B."/>
            <person name="Porter K."/>
            <person name="Rice C.M."/>
            <person name="Rogosin A."/>
            <person name="Ross M.T."/>
            <person name="Sarafidou T."/>
            <person name="Sehra H.K."/>
            <person name="Shownkeen R."/>
            <person name="Skuce C.D."/>
            <person name="Smith M."/>
            <person name="Standring L."/>
            <person name="Sycamore N."/>
            <person name="Tester J."/>
            <person name="Thorpe A."/>
            <person name="Torcasso W."/>
            <person name="Tracey A."/>
            <person name="Tromans A."/>
            <person name="Tsolas J."/>
            <person name="Wall M."/>
            <person name="Walsh J."/>
            <person name="Wang H."/>
            <person name="Weinstock K."/>
            <person name="West A.P."/>
            <person name="Willey D.L."/>
            <person name="Whitehead S.L."/>
            <person name="Wilming L."/>
            <person name="Wray P.W."/>
            <person name="Young L."/>
            <person name="Chen Y."/>
            <person name="Lovering R.C."/>
            <person name="Moschonas N.K."/>
            <person name="Siebert R."/>
            <person name="Fechtel K."/>
            <person name="Bentley D."/>
            <person name="Durbin R.M."/>
            <person name="Hubbard T."/>
            <person name="Doucette-Stamm L."/>
            <person name="Beck S."/>
            <person name="Smith D.R."/>
            <person name="Rogers J."/>
        </authorList>
    </citation>
    <scope>NUCLEOTIDE SEQUENCE [LARGE SCALE GENOMIC DNA]</scope>
</reference>
<reference key="2">
    <citation type="journal article" date="2004" name="Genome Res.">
        <title>The status, quality, and expansion of the NIH full-length cDNA project: the Mammalian Gene Collection (MGC).</title>
        <authorList>
            <consortium name="The MGC Project Team"/>
        </authorList>
    </citation>
    <scope>NUCLEOTIDE SEQUENCE [LARGE SCALE MRNA] (ISOFORM 1)</scope>
    <scope>VARIANT ASN-262</scope>
    <source>
        <tissue>Skin</tissue>
    </source>
</reference>
<reference key="3">
    <citation type="journal article" date="2004" name="Nat. Genet.">
        <title>Complete sequencing and characterization of 21,243 full-length human cDNAs.</title>
        <authorList>
            <person name="Ota T."/>
            <person name="Suzuki Y."/>
            <person name="Nishikawa T."/>
            <person name="Otsuki T."/>
            <person name="Sugiyama T."/>
            <person name="Irie R."/>
            <person name="Wakamatsu A."/>
            <person name="Hayashi K."/>
            <person name="Sato H."/>
            <person name="Nagai K."/>
            <person name="Kimura K."/>
            <person name="Makita H."/>
            <person name="Sekine M."/>
            <person name="Obayashi M."/>
            <person name="Nishi T."/>
            <person name="Shibahara T."/>
            <person name="Tanaka T."/>
            <person name="Ishii S."/>
            <person name="Yamamoto J."/>
            <person name="Saito K."/>
            <person name="Kawai Y."/>
            <person name="Isono Y."/>
            <person name="Nakamura Y."/>
            <person name="Nagahari K."/>
            <person name="Murakami K."/>
            <person name="Yasuda T."/>
            <person name="Iwayanagi T."/>
            <person name="Wagatsuma M."/>
            <person name="Shiratori A."/>
            <person name="Sudo H."/>
            <person name="Hosoiri T."/>
            <person name="Kaku Y."/>
            <person name="Kodaira H."/>
            <person name="Kondo H."/>
            <person name="Sugawara M."/>
            <person name="Takahashi M."/>
            <person name="Kanda K."/>
            <person name="Yokoi T."/>
            <person name="Furuya T."/>
            <person name="Kikkawa E."/>
            <person name="Omura Y."/>
            <person name="Abe K."/>
            <person name="Kamihara K."/>
            <person name="Katsuta N."/>
            <person name="Sato K."/>
            <person name="Tanikawa M."/>
            <person name="Yamazaki M."/>
            <person name="Ninomiya K."/>
            <person name="Ishibashi T."/>
            <person name="Yamashita H."/>
            <person name="Murakawa K."/>
            <person name="Fujimori K."/>
            <person name="Tanai H."/>
            <person name="Kimata M."/>
            <person name="Watanabe M."/>
            <person name="Hiraoka S."/>
            <person name="Chiba Y."/>
            <person name="Ishida S."/>
            <person name="Ono Y."/>
            <person name="Takiguchi S."/>
            <person name="Watanabe S."/>
            <person name="Yosida M."/>
            <person name="Hotuta T."/>
            <person name="Kusano J."/>
            <person name="Kanehori K."/>
            <person name="Takahashi-Fujii A."/>
            <person name="Hara H."/>
            <person name="Tanase T.-O."/>
            <person name="Nomura Y."/>
            <person name="Togiya S."/>
            <person name="Komai F."/>
            <person name="Hara R."/>
            <person name="Takeuchi K."/>
            <person name="Arita M."/>
            <person name="Imose N."/>
            <person name="Musashino K."/>
            <person name="Yuuki H."/>
            <person name="Oshima A."/>
            <person name="Sasaki N."/>
            <person name="Aotsuka S."/>
            <person name="Yoshikawa Y."/>
            <person name="Matsunawa H."/>
            <person name="Ichihara T."/>
            <person name="Shiohata N."/>
            <person name="Sano S."/>
            <person name="Moriya S."/>
            <person name="Momiyama H."/>
            <person name="Satoh N."/>
            <person name="Takami S."/>
            <person name="Terashima Y."/>
            <person name="Suzuki O."/>
            <person name="Nakagawa S."/>
            <person name="Senoh A."/>
            <person name="Mizoguchi H."/>
            <person name="Goto Y."/>
            <person name="Shimizu F."/>
            <person name="Wakebe H."/>
            <person name="Hishigaki H."/>
            <person name="Watanabe T."/>
            <person name="Sugiyama A."/>
            <person name="Takemoto M."/>
            <person name="Kawakami B."/>
            <person name="Yamazaki M."/>
            <person name="Watanabe K."/>
            <person name="Kumagai A."/>
            <person name="Itakura S."/>
            <person name="Fukuzumi Y."/>
            <person name="Fujimori Y."/>
            <person name="Komiyama M."/>
            <person name="Tashiro H."/>
            <person name="Tanigami A."/>
            <person name="Fujiwara T."/>
            <person name="Ono T."/>
            <person name="Yamada K."/>
            <person name="Fujii Y."/>
            <person name="Ozaki K."/>
            <person name="Hirao M."/>
            <person name="Ohmori Y."/>
            <person name="Kawabata A."/>
            <person name="Hikiji T."/>
            <person name="Kobatake N."/>
            <person name="Inagaki H."/>
            <person name="Ikema Y."/>
            <person name="Okamoto S."/>
            <person name="Okitani R."/>
            <person name="Kawakami T."/>
            <person name="Noguchi S."/>
            <person name="Itoh T."/>
            <person name="Shigeta K."/>
            <person name="Senba T."/>
            <person name="Matsumura K."/>
            <person name="Nakajima Y."/>
            <person name="Mizuno T."/>
            <person name="Morinaga M."/>
            <person name="Sasaki M."/>
            <person name="Togashi T."/>
            <person name="Oyama M."/>
            <person name="Hata H."/>
            <person name="Watanabe M."/>
            <person name="Komatsu T."/>
            <person name="Mizushima-Sugano J."/>
            <person name="Satoh T."/>
            <person name="Shirai Y."/>
            <person name="Takahashi Y."/>
            <person name="Nakagawa K."/>
            <person name="Okumura K."/>
            <person name="Nagase T."/>
            <person name="Nomura N."/>
            <person name="Kikuchi H."/>
            <person name="Masuho Y."/>
            <person name="Yamashita R."/>
            <person name="Nakai K."/>
            <person name="Yada T."/>
            <person name="Nakamura Y."/>
            <person name="Ohara O."/>
            <person name="Isogai T."/>
            <person name="Sugano S."/>
        </authorList>
    </citation>
    <scope>NUCLEOTIDE SEQUENCE [LARGE SCALE MRNA] OF 1-662 (ISOFORM 1)</scope>
    <source>
        <tissue>Testis</tissue>
    </source>
</reference>
<reference key="4">
    <citation type="submission" date="2001-10" db="EMBL/GenBank/DDBJ databases">
        <authorList>
            <person name="Guo J.H."/>
            <person name="Yu L."/>
        </authorList>
    </citation>
    <scope>NUCLEOTIDE SEQUENCE [LARGE SCALE MRNA] OF 362-699 (ISOFORM 2)</scope>
</reference>
<reference key="5">
    <citation type="journal article" date="2010" name="Mol. Biol. Cell">
        <title>Centriolar association of ALMS1 and likely centrosomal functions of the ALMS motif-containing proteins C10orf90 and KIAA1731.</title>
        <authorList>
            <person name="Knorz V.J."/>
            <person name="Spalluto C."/>
            <person name="Lessard M."/>
            <person name="Purvis T.L."/>
            <person name="Adigun F.F."/>
            <person name="Collin G.B."/>
            <person name="Hanley N.A."/>
            <person name="Wilson D.I."/>
            <person name="Hearn T."/>
        </authorList>
    </citation>
    <scope>SUBCELLULAR LOCATION</scope>
    <scope>POSSIBLE FUNCTION</scope>
</reference>
<accession>Q96M02</accession>
<accession>B9EIQ9</accession>
<accession>Q5JRP6</accession>
<accession>Q5T023</accession>
<accession>Q8NCV5</accession>
<accession>Q8WU75</accession>
<sequence>MLKLSGEGLRDSYHSRRDQIALKNLQSDVTEAKSDFTKETLASQNTKMISSIVISQMIDENKSRENRASLPLPCAIAQSRAHHAKQSLANRSGVNIHRAFALLPGRLGIPAPSDERGPEAELPPKEERPCGGPRRGFASITITARRVGPPARALVWGTAGDSLCPKCRAEDTLFQAPPALANGAHPGRHQRSFACTEFSRNSSVVRLKVPEAHTGLCERRKYWVTHADDKETSFSPDTPLSGKSPLVFSSCVHLRVSQQCPDSIYYVDKSLSVPIEPPQIASPKMHRSVLSLNLNCSSHRLTADGVDGLVNREPISEALKQELLEGDQDLVGQRWNPGLQESHLKETPSLRRVHLGTGACPWSGSFPLENTELANVGANQVTVRKGEKDHTTHCHASDHANQLSIHIPGWSYRAVHTKVFSGSSKRQQGEVCMTVSAPPVEQKPTRHFLPIGDSSPSDDCLSRDLSEPTERRHQSFLKPRILFPGFLCPLQDVCASLQEDNGVQIESKFPKGDYTCCDLVVKIKECKKSEDPTTPEPSPAAPSPAPRDGAGSPGLSEDCSESQQTPARSLTLQEALEVRKPQFISRSQERLKKLEHMVQQRKAQRKEDLRQKQSLLPIRTSKKQFTIPHPLSDNLFKPKERCISEKEMHMRSKRIYDNLPEVKKKKEEQRKRVILQSNRLRAEVFKKQLLDQLLQRNAV</sequence>
<organism>
    <name type="scientific">Homo sapiens</name>
    <name type="common">Human</name>
    <dbReference type="NCBI Taxonomy" id="9606"/>
    <lineage>
        <taxon>Eukaryota</taxon>
        <taxon>Metazoa</taxon>
        <taxon>Chordata</taxon>
        <taxon>Craniata</taxon>
        <taxon>Vertebrata</taxon>
        <taxon>Euteleostomi</taxon>
        <taxon>Mammalia</taxon>
        <taxon>Eutheria</taxon>
        <taxon>Euarchontoglires</taxon>
        <taxon>Primates</taxon>
        <taxon>Haplorrhini</taxon>
        <taxon>Catarrhini</taxon>
        <taxon>Hominidae</taxon>
        <taxon>Homo</taxon>
    </lineage>
</organism>